<feature type="chain" id="PRO_1000215945" description="Segregation and condensation protein B">
    <location>
        <begin position="1"/>
        <end position="179"/>
    </location>
</feature>
<organism>
    <name type="scientific">Streptococcus equi subsp. zooepidemicus (strain H70)</name>
    <dbReference type="NCBI Taxonomy" id="553483"/>
    <lineage>
        <taxon>Bacteria</taxon>
        <taxon>Bacillati</taxon>
        <taxon>Bacillota</taxon>
        <taxon>Bacilli</taxon>
        <taxon>Lactobacillales</taxon>
        <taxon>Streptococcaceae</taxon>
        <taxon>Streptococcus</taxon>
    </lineage>
</organism>
<dbReference type="EMBL" id="FM204884">
    <property type="protein sequence ID" value="CAW98154.1"/>
    <property type="molecule type" value="Genomic_DNA"/>
</dbReference>
<dbReference type="SMR" id="C0MGH1"/>
<dbReference type="KEGG" id="seq:SZO_03310"/>
<dbReference type="eggNOG" id="COG1386">
    <property type="taxonomic scope" value="Bacteria"/>
</dbReference>
<dbReference type="HOGENOM" id="CLU_045647_5_3_9"/>
<dbReference type="Proteomes" id="UP000001368">
    <property type="component" value="Chromosome"/>
</dbReference>
<dbReference type="GO" id="GO:0005737">
    <property type="term" value="C:cytoplasm"/>
    <property type="evidence" value="ECO:0007669"/>
    <property type="project" value="UniProtKB-SubCell"/>
</dbReference>
<dbReference type="GO" id="GO:0051301">
    <property type="term" value="P:cell division"/>
    <property type="evidence" value="ECO:0007669"/>
    <property type="project" value="UniProtKB-KW"/>
</dbReference>
<dbReference type="GO" id="GO:0051304">
    <property type="term" value="P:chromosome separation"/>
    <property type="evidence" value="ECO:0007669"/>
    <property type="project" value="InterPro"/>
</dbReference>
<dbReference type="GO" id="GO:0006260">
    <property type="term" value="P:DNA replication"/>
    <property type="evidence" value="ECO:0007669"/>
    <property type="project" value="UniProtKB-UniRule"/>
</dbReference>
<dbReference type="Gene3D" id="1.10.10.10">
    <property type="entry name" value="Winged helix-like DNA-binding domain superfamily/Winged helix DNA-binding domain"/>
    <property type="match status" value="2"/>
</dbReference>
<dbReference type="HAMAP" id="MF_01804">
    <property type="entry name" value="ScpB"/>
    <property type="match status" value="1"/>
</dbReference>
<dbReference type="InterPro" id="IPR005234">
    <property type="entry name" value="ScpB_csome_segregation"/>
</dbReference>
<dbReference type="InterPro" id="IPR036388">
    <property type="entry name" value="WH-like_DNA-bd_sf"/>
</dbReference>
<dbReference type="InterPro" id="IPR036390">
    <property type="entry name" value="WH_DNA-bd_sf"/>
</dbReference>
<dbReference type="NCBIfam" id="TIGR00281">
    <property type="entry name" value="SMC-Scp complex subunit ScpB"/>
    <property type="match status" value="1"/>
</dbReference>
<dbReference type="PANTHER" id="PTHR34298">
    <property type="entry name" value="SEGREGATION AND CONDENSATION PROTEIN B"/>
    <property type="match status" value="1"/>
</dbReference>
<dbReference type="PANTHER" id="PTHR34298:SF2">
    <property type="entry name" value="SEGREGATION AND CONDENSATION PROTEIN B"/>
    <property type="match status" value="1"/>
</dbReference>
<dbReference type="Pfam" id="PF04079">
    <property type="entry name" value="SMC_ScpB"/>
    <property type="match status" value="1"/>
</dbReference>
<dbReference type="PIRSF" id="PIRSF019345">
    <property type="entry name" value="ScpB"/>
    <property type="match status" value="1"/>
</dbReference>
<dbReference type="SUPFAM" id="SSF46785">
    <property type="entry name" value="Winged helix' DNA-binding domain"/>
    <property type="match status" value="2"/>
</dbReference>
<name>SCPB_STRS7</name>
<evidence type="ECO:0000255" key="1">
    <source>
        <dbReference type="HAMAP-Rule" id="MF_01804"/>
    </source>
</evidence>
<protein>
    <recommendedName>
        <fullName evidence="1">Segregation and condensation protein B</fullName>
    </recommendedName>
</protein>
<gene>
    <name evidence="1" type="primary">scpB</name>
    <name type="ordered locus">SZO_03310</name>
</gene>
<proteinExistence type="inferred from homology"/>
<accession>C0MGH1</accession>
<keyword id="KW-0131">Cell cycle</keyword>
<keyword id="KW-0132">Cell division</keyword>
<keyword id="KW-0159">Chromosome partition</keyword>
<keyword id="KW-0963">Cytoplasm</keyword>
<reference key="1">
    <citation type="journal article" date="2009" name="PLoS Pathog.">
        <title>Genomic evidence for the evolution of Streptococcus equi: host restriction, increased virulence, and genetic exchange with human pathogens.</title>
        <authorList>
            <person name="Holden M.T.G."/>
            <person name="Heather Z."/>
            <person name="Paillot R."/>
            <person name="Steward K.F."/>
            <person name="Webb K."/>
            <person name="Ainslie F."/>
            <person name="Jourdan T."/>
            <person name="Bason N.C."/>
            <person name="Holroyd N.E."/>
            <person name="Mungall K."/>
            <person name="Quail M.A."/>
            <person name="Sanders M."/>
            <person name="Simmonds M."/>
            <person name="Willey D."/>
            <person name="Brooks K."/>
            <person name="Aanensen D.M."/>
            <person name="Spratt B.G."/>
            <person name="Jolley K.A."/>
            <person name="Maiden M.C.J."/>
            <person name="Kehoe M."/>
            <person name="Chanter N."/>
            <person name="Bentley S.D."/>
            <person name="Robinson C."/>
            <person name="Maskell D.J."/>
            <person name="Parkhill J."/>
            <person name="Waller A.S."/>
        </authorList>
    </citation>
    <scope>NUCLEOTIDE SEQUENCE [LARGE SCALE GENOMIC DNA]</scope>
    <source>
        <strain>H70</strain>
    </source>
</reference>
<sequence length="179" mass="19932">MTYLSQLEALLFVAGEEGLSLRQLVSLLELTPTALQQQLDKLSQKYKEDKESGLCLIESSRTYKLVTKECLAPLLKDYAKAPINQTLSRASLEVLSIVAYKQPITRIEIDEIRGVNSSGALSKLVAFGLVQEAGKKEVIGRPNLYATTDYFLDYMGINHLEELVDISSIAVEEQETTLF</sequence>
<comment type="function">
    <text evidence="1">Participates in chromosomal partition during cell division. May act via the formation of a condensin-like complex containing Smc and ScpA that pull DNA away from mid-cell into both cell halves.</text>
</comment>
<comment type="subunit">
    <text evidence="1">Homodimer. Homodimerization may be required to stabilize the binding of ScpA to the Smc head domains. Component of a cohesin-like complex composed of ScpA, ScpB and the Smc homodimer, in which ScpA and ScpB bind to the head domain of Smc. The presence of the three proteins is required for the association of the complex with DNA.</text>
</comment>
<comment type="subcellular location">
    <subcellularLocation>
        <location evidence="1">Cytoplasm</location>
    </subcellularLocation>
    <text evidence="1">Associated with two foci at the outer edges of the nucleoid region in young cells, and at four foci within both cell halves in older cells.</text>
</comment>
<comment type="similarity">
    <text evidence="1">Belongs to the ScpB family.</text>
</comment>